<reference key="1">
    <citation type="journal article" date="2002" name="Nature">
        <title>The genome sequence of Schizosaccharomyces pombe.</title>
        <authorList>
            <person name="Wood V."/>
            <person name="Gwilliam R."/>
            <person name="Rajandream M.A."/>
            <person name="Lyne M.H."/>
            <person name="Lyne R."/>
            <person name="Stewart A."/>
            <person name="Sgouros J.G."/>
            <person name="Peat N."/>
            <person name="Hayles J."/>
            <person name="Baker S.G."/>
            <person name="Basham D."/>
            <person name="Bowman S."/>
            <person name="Brooks K."/>
            <person name="Brown D."/>
            <person name="Brown S."/>
            <person name="Chillingworth T."/>
            <person name="Churcher C.M."/>
            <person name="Collins M."/>
            <person name="Connor R."/>
            <person name="Cronin A."/>
            <person name="Davis P."/>
            <person name="Feltwell T."/>
            <person name="Fraser A."/>
            <person name="Gentles S."/>
            <person name="Goble A."/>
            <person name="Hamlin N."/>
            <person name="Harris D.E."/>
            <person name="Hidalgo J."/>
            <person name="Hodgson G."/>
            <person name="Holroyd S."/>
            <person name="Hornsby T."/>
            <person name="Howarth S."/>
            <person name="Huckle E.J."/>
            <person name="Hunt S."/>
            <person name="Jagels K."/>
            <person name="James K.D."/>
            <person name="Jones L."/>
            <person name="Jones M."/>
            <person name="Leather S."/>
            <person name="McDonald S."/>
            <person name="McLean J."/>
            <person name="Mooney P."/>
            <person name="Moule S."/>
            <person name="Mungall K.L."/>
            <person name="Murphy L.D."/>
            <person name="Niblett D."/>
            <person name="Odell C."/>
            <person name="Oliver K."/>
            <person name="O'Neil S."/>
            <person name="Pearson D."/>
            <person name="Quail M.A."/>
            <person name="Rabbinowitsch E."/>
            <person name="Rutherford K.M."/>
            <person name="Rutter S."/>
            <person name="Saunders D."/>
            <person name="Seeger K."/>
            <person name="Sharp S."/>
            <person name="Skelton J."/>
            <person name="Simmonds M.N."/>
            <person name="Squares R."/>
            <person name="Squares S."/>
            <person name="Stevens K."/>
            <person name="Taylor K."/>
            <person name="Taylor R.G."/>
            <person name="Tivey A."/>
            <person name="Walsh S.V."/>
            <person name="Warren T."/>
            <person name="Whitehead S."/>
            <person name="Woodward J.R."/>
            <person name="Volckaert G."/>
            <person name="Aert R."/>
            <person name="Robben J."/>
            <person name="Grymonprez B."/>
            <person name="Weltjens I."/>
            <person name="Vanstreels E."/>
            <person name="Rieger M."/>
            <person name="Schaefer M."/>
            <person name="Mueller-Auer S."/>
            <person name="Gabel C."/>
            <person name="Fuchs M."/>
            <person name="Duesterhoeft A."/>
            <person name="Fritzc C."/>
            <person name="Holzer E."/>
            <person name="Moestl D."/>
            <person name="Hilbert H."/>
            <person name="Borzym K."/>
            <person name="Langer I."/>
            <person name="Beck A."/>
            <person name="Lehrach H."/>
            <person name="Reinhardt R."/>
            <person name="Pohl T.M."/>
            <person name="Eger P."/>
            <person name="Zimmermann W."/>
            <person name="Wedler H."/>
            <person name="Wambutt R."/>
            <person name="Purnelle B."/>
            <person name="Goffeau A."/>
            <person name="Cadieu E."/>
            <person name="Dreano S."/>
            <person name="Gloux S."/>
            <person name="Lelaure V."/>
            <person name="Mottier S."/>
            <person name="Galibert F."/>
            <person name="Aves S.J."/>
            <person name="Xiang Z."/>
            <person name="Hunt C."/>
            <person name="Moore K."/>
            <person name="Hurst S.M."/>
            <person name="Lucas M."/>
            <person name="Rochet M."/>
            <person name="Gaillardin C."/>
            <person name="Tallada V.A."/>
            <person name="Garzon A."/>
            <person name="Thode G."/>
            <person name="Daga R.R."/>
            <person name="Cruzado L."/>
            <person name="Jimenez J."/>
            <person name="Sanchez M."/>
            <person name="del Rey F."/>
            <person name="Benito J."/>
            <person name="Dominguez A."/>
            <person name="Revuelta J.L."/>
            <person name="Moreno S."/>
            <person name="Armstrong J."/>
            <person name="Forsburg S.L."/>
            <person name="Cerutti L."/>
            <person name="Lowe T."/>
            <person name="McCombie W.R."/>
            <person name="Paulsen I."/>
            <person name="Potashkin J."/>
            <person name="Shpakovski G.V."/>
            <person name="Ussery D."/>
            <person name="Barrell B.G."/>
            <person name="Nurse P."/>
        </authorList>
    </citation>
    <scope>NUCLEOTIDE SEQUENCE [LARGE SCALE GENOMIC DNA]</scope>
    <source>
        <strain>972 / ATCC 24843</strain>
    </source>
</reference>
<reference key="2">
    <citation type="journal article" date="2000" name="Genes Cells">
        <title>Large-scale screening of intracellular protein localization in living fission yeast cells by the use of a GFP-fusion genomic DNA library.</title>
        <authorList>
            <person name="Ding D.-Q."/>
            <person name="Tomita Y."/>
            <person name="Yamamoto A."/>
            <person name="Chikashige Y."/>
            <person name="Haraguchi T."/>
            <person name="Hiraoka Y."/>
        </authorList>
    </citation>
    <scope>NUCLEOTIDE SEQUENCE [LARGE SCALE GENOMIC DNA] OF 240-350</scope>
    <scope>SUBCELLULAR LOCATION</scope>
    <source>
        <strain>ATCC 38364 / 968</strain>
    </source>
</reference>
<reference key="3">
    <citation type="journal article" date="2002" name="J. Biol. Chem.">
        <title>Interactions between fission yeast mRNA capping enzymes and elongation factor Spt5.</title>
        <authorList>
            <person name="Pei Y."/>
            <person name="Shuman S."/>
        </authorList>
    </citation>
    <scope>FUNCTION</scope>
    <scope>INTERACTION WITH SPT4</scope>
</reference>
<reference key="4">
    <citation type="journal article" date="2006" name="Nat. Biotechnol.">
        <title>ORFeome cloning and global analysis of protein localization in the fission yeast Schizosaccharomyces pombe.</title>
        <authorList>
            <person name="Matsuyama A."/>
            <person name="Arai R."/>
            <person name="Yashiroda Y."/>
            <person name="Shirai A."/>
            <person name="Kamata A."/>
            <person name="Sekido S."/>
            <person name="Kobayashi Y."/>
            <person name="Hashimoto A."/>
            <person name="Hamamoto M."/>
            <person name="Hiraoka Y."/>
            <person name="Horinouchi S."/>
            <person name="Yoshida M."/>
        </authorList>
    </citation>
    <scope>SUBCELLULAR LOCATION [LARGE SCALE ANALYSIS]</scope>
</reference>
<reference key="5">
    <citation type="journal article" date="2008" name="J. Proteome Res.">
        <title>Phosphoproteome analysis of fission yeast.</title>
        <authorList>
            <person name="Wilson-Grady J.T."/>
            <person name="Villen J."/>
            <person name="Gygi S.P."/>
        </authorList>
    </citation>
    <scope>PHOSPHORYLATION [LARGE SCALE ANALYSIS] AT SER-36</scope>
    <scope>IDENTIFICATION BY MASS SPECTROMETRY</scope>
</reference>
<name>SPT5_SCHPO</name>
<keyword id="KW-0002">3D-structure</keyword>
<keyword id="KW-0507">mRNA processing</keyword>
<keyword id="KW-0539">Nucleus</keyword>
<keyword id="KW-0597">Phosphoprotein</keyword>
<keyword id="KW-1185">Reference proteome</keyword>
<keyword id="KW-0677">Repeat</keyword>
<keyword id="KW-0804">Transcription</keyword>
<feature type="chain" id="PRO_0000238565" description="Transcription elongation factor spt5">
    <location>
        <begin position="1"/>
        <end position="990"/>
    </location>
</feature>
<feature type="domain" description="KOW 1">
    <location>
        <begin position="471"/>
        <end position="498"/>
    </location>
</feature>
<feature type="domain" description="KOW 2">
    <location>
        <begin position="520"/>
        <end position="547"/>
    </location>
</feature>
<feature type="domain" description="KOW 3">
    <location>
        <begin position="727"/>
        <end position="754"/>
    </location>
</feature>
<feature type="repeat" description="1">
    <location>
        <begin position="818"/>
        <end position="826"/>
    </location>
</feature>
<feature type="repeat" description="2">
    <location>
        <begin position="827"/>
        <end position="835"/>
    </location>
</feature>
<feature type="repeat" description="3">
    <location>
        <begin position="836"/>
        <end position="844"/>
    </location>
</feature>
<feature type="repeat" description="4">
    <location>
        <begin position="845"/>
        <end position="853"/>
    </location>
</feature>
<feature type="repeat" description="5">
    <location>
        <begin position="854"/>
        <end position="862"/>
    </location>
</feature>
<feature type="repeat" description="6">
    <location>
        <begin position="863"/>
        <end position="871"/>
    </location>
</feature>
<feature type="repeat" description="7">
    <location>
        <begin position="872"/>
        <end position="880"/>
    </location>
</feature>
<feature type="repeat" description="8">
    <location>
        <begin position="881"/>
        <end position="889"/>
    </location>
</feature>
<feature type="repeat" description="9">
    <location>
        <begin position="890"/>
        <end position="898"/>
    </location>
</feature>
<feature type="repeat" description="10">
    <location>
        <begin position="899"/>
        <end position="907"/>
    </location>
</feature>
<feature type="repeat" description="11">
    <location>
        <begin position="908"/>
        <end position="916"/>
    </location>
</feature>
<feature type="region of interest" description="Disordered" evidence="2">
    <location>
        <begin position="1"/>
        <end position="176"/>
    </location>
</feature>
<feature type="region of interest" description="11 X 9 AA tandem repeats of T-P-A-W-N-X-G-[NS]-[KR]">
    <location>
        <begin position="818"/>
        <end position="916"/>
    </location>
</feature>
<feature type="region of interest" description="Disordered" evidence="2">
    <location>
        <begin position="818"/>
        <end position="862"/>
    </location>
</feature>
<feature type="region of interest" description="Disordered" evidence="2">
    <location>
        <begin position="946"/>
        <end position="990"/>
    </location>
</feature>
<feature type="compositionally biased region" description="Polar residues" evidence="2">
    <location>
        <begin position="29"/>
        <end position="41"/>
    </location>
</feature>
<feature type="compositionally biased region" description="Polar residues" evidence="2">
    <location>
        <begin position="52"/>
        <end position="74"/>
    </location>
</feature>
<feature type="compositionally biased region" description="Acidic residues" evidence="2">
    <location>
        <begin position="97"/>
        <end position="130"/>
    </location>
</feature>
<feature type="compositionally biased region" description="Basic residues" evidence="2">
    <location>
        <begin position="133"/>
        <end position="142"/>
    </location>
</feature>
<feature type="compositionally biased region" description="Acidic residues" evidence="2">
    <location>
        <begin position="149"/>
        <end position="176"/>
    </location>
</feature>
<feature type="compositionally biased region" description="Polar residues" evidence="2">
    <location>
        <begin position="824"/>
        <end position="862"/>
    </location>
</feature>
<feature type="compositionally biased region" description="Low complexity" evidence="2">
    <location>
        <begin position="960"/>
        <end position="974"/>
    </location>
</feature>
<feature type="modified residue" description="Phosphoserine" evidence="6">
    <location>
        <position position="36"/>
    </location>
</feature>
<feature type="strand" evidence="8">
    <location>
        <begin position="733"/>
        <end position="736"/>
    </location>
</feature>
<feature type="turn" evidence="8">
    <location>
        <begin position="740"/>
        <end position="743"/>
    </location>
</feature>
<feature type="strand" evidence="8">
    <location>
        <begin position="745"/>
        <end position="751"/>
    </location>
</feature>
<feature type="strand" evidence="8">
    <location>
        <begin position="753"/>
        <end position="762"/>
    </location>
</feature>
<feature type="strand" evidence="8">
    <location>
        <begin position="766"/>
        <end position="770"/>
    </location>
</feature>
<feature type="helix" evidence="8">
    <location>
        <begin position="771"/>
        <end position="773"/>
    </location>
</feature>
<feature type="strand" evidence="8">
    <location>
        <begin position="774"/>
        <end position="777"/>
    </location>
</feature>
<feature type="helix" evidence="8">
    <location>
        <begin position="786"/>
        <end position="794"/>
    </location>
</feature>
<dbReference type="EMBL" id="CU329670">
    <property type="protein sequence ID" value="CAB16890.1"/>
    <property type="molecule type" value="Genomic_DNA"/>
</dbReference>
<dbReference type="EMBL" id="AB028017">
    <property type="protein sequence ID" value="BAA87321.1"/>
    <property type="molecule type" value="Genomic_DNA"/>
</dbReference>
<dbReference type="PIR" id="T38274">
    <property type="entry name" value="T38274"/>
</dbReference>
<dbReference type="RefSeq" id="NP_593191.1">
    <property type="nucleotide sequence ID" value="NM_001018587.2"/>
</dbReference>
<dbReference type="PDB" id="4PZ8">
    <property type="method" value="X-ray"/>
    <property type="resolution" value="3.10 A"/>
    <property type="chains" value="B=827-844"/>
</dbReference>
<dbReference type="PDB" id="8QSZ">
    <property type="method" value="EM"/>
    <property type="resolution" value="2.67 A"/>
    <property type="chains" value="Y=1-990"/>
</dbReference>
<dbReference type="PDBsum" id="4PZ8"/>
<dbReference type="PDBsum" id="8QSZ"/>
<dbReference type="EMDB" id="EMD-18643"/>
<dbReference type="SMR" id="O13936"/>
<dbReference type="BioGRID" id="278406">
    <property type="interactions" value="26"/>
</dbReference>
<dbReference type="FunCoup" id="O13936">
    <property type="interactions" value="794"/>
</dbReference>
<dbReference type="STRING" id="284812.O13936"/>
<dbReference type="iPTMnet" id="O13936"/>
<dbReference type="SwissPalm" id="O13936"/>
<dbReference type="PaxDb" id="4896-SPAC23C4.19.1"/>
<dbReference type="EnsemblFungi" id="SPAC23C4.19.1">
    <property type="protein sequence ID" value="SPAC23C4.19.1:pep"/>
    <property type="gene ID" value="SPAC23C4.19"/>
</dbReference>
<dbReference type="GeneID" id="2541916"/>
<dbReference type="KEGG" id="spo:2541916"/>
<dbReference type="PomBase" id="SPAC23C4.19">
    <property type="gene designation" value="spt5"/>
</dbReference>
<dbReference type="VEuPathDB" id="FungiDB:SPAC23C4.19"/>
<dbReference type="eggNOG" id="KOG1999">
    <property type="taxonomic scope" value="Eukaryota"/>
</dbReference>
<dbReference type="HOGENOM" id="CLU_003537_1_1_1"/>
<dbReference type="InParanoid" id="O13936"/>
<dbReference type="OMA" id="YPVGYMN"/>
<dbReference type="PhylomeDB" id="O13936"/>
<dbReference type="Reactome" id="R-SPO-113418">
    <property type="pathway name" value="Formation of the Early Elongation Complex"/>
</dbReference>
<dbReference type="Reactome" id="R-SPO-674695">
    <property type="pathway name" value="RNA Polymerase II Pre-transcription Events"/>
</dbReference>
<dbReference type="Reactome" id="R-SPO-6796648">
    <property type="pathway name" value="TP53 Regulates Transcription of DNA Repair Genes"/>
</dbReference>
<dbReference type="Reactome" id="R-SPO-72086">
    <property type="pathway name" value="mRNA Capping"/>
</dbReference>
<dbReference type="Reactome" id="R-SPO-77075">
    <property type="pathway name" value="RNA Pol II CTD phosphorylation and interaction with CE"/>
</dbReference>
<dbReference type="EvolutionaryTrace" id="O13936"/>
<dbReference type="PRO" id="PR:O13936"/>
<dbReference type="Proteomes" id="UP000002485">
    <property type="component" value="Chromosome I"/>
</dbReference>
<dbReference type="GO" id="GO:0000785">
    <property type="term" value="C:chromatin"/>
    <property type="evidence" value="ECO:0000305"/>
    <property type="project" value="PomBase"/>
</dbReference>
<dbReference type="GO" id="GO:0032044">
    <property type="term" value="C:DSIF complex"/>
    <property type="evidence" value="ECO:0000314"/>
    <property type="project" value="PomBase"/>
</dbReference>
<dbReference type="GO" id="GO:0005634">
    <property type="term" value="C:nucleus"/>
    <property type="evidence" value="ECO:0007005"/>
    <property type="project" value="PomBase"/>
</dbReference>
<dbReference type="GO" id="GO:0140463">
    <property type="term" value="F:chromatin-protein adaptor activity"/>
    <property type="evidence" value="ECO:0000314"/>
    <property type="project" value="PomBase"/>
</dbReference>
<dbReference type="GO" id="GO:0003729">
    <property type="term" value="F:mRNA binding"/>
    <property type="evidence" value="ECO:0000318"/>
    <property type="project" value="GO_Central"/>
</dbReference>
<dbReference type="GO" id="GO:0003711">
    <property type="term" value="F:transcription elongation factor activity"/>
    <property type="evidence" value="ECO:0000315"/>
    <property type="project" value="PomBase"/>
</dbReference>
<dbReference type="GO" id="GO:0006397">
    <property type="term" value="P:mRNA processing"/>
    <property type="evidence" value="ECO:0007669"/>
    <property type="project" value="UniProtKB-KW"/>
</dbReference>
<dbReference type="GO" id="GO:0032784">
    <property type="term" value="P:regulation of DNA-templated transcription elongation"/>
    <property type="evidence" value="ECO:0007669"/>
    <property type="project" value="InterPro"/>
</dbReference>
<dbReference type="GO" id="GO:0006357">
    <property type="term" value="P:regulation of transcription by RNA polymerase II"/>
    <property type="evidence" value="ECO:0007669"/>
    <property type="project" value="InterPro"/>
</dbReference>
<dbReference type="GO" id="GO:0006368">
    <property type="term" value="P:transcription elongation by RNA polymerase II"/>
    <property type="evidence" value="ECO:0000315"/>
    <property type="project" value="PomBase"/>
</dbReference>
<dbReference type="GO" id="GO:0140673">
    <property type="term" value="P:transcription elongation-coupled chromatin remodeling"/>
    <property type="evidence" value="ECO:0007669"/>
    <property type="project" value="InterPro"/>
</dbReference>
<dbReference type="CDD" id="cd06081">
    <property type="entry name" value="KOW_Spt5_1"/>
    <property type="match status" value="1"/>
</dbReference>
<dbReference type="CDD" id="cd06082">
    <property type="entry name" value="KOW_Spt5_2"/>
    <property type="match status" value="1"/>
</dbReference>
<dbReference type="CDD" id="cd06083">
    <property type="entry name" value="KOW_Spt5_3"/>
    <property type="match status" value="1"/>
</dbReference>
<dbReference type="CDD" id="cd06084">
    <property type="entry name" value="KOW_Spt5_4"/>
    <property type="match status" value="1"/>
</dbReference>
<dbReference type="CDD" id="cd06085">
    <property type="entry name" value="KOW_Spt5_5"/>
    <property type="match status" value="1"/>
</dbReference>
<dbReference type="CDD" id="cd09888">
    <property type="entry name" value="NGN_Euk"/>
    <property type="match status" value="1"/>
</dbReference>
<dbReference type="FunFam" id="2.30.30.30:FF:000018">
    <property type="entry name" value="Transcription elongation factor SPT5"/>
    <property type="match status" value="1"/>
</dbReference>
<dbReference type="FunFam" id="3.30.70.940:FF:000005">
    <property type="entry name" value="Transcription elongation factor SPT5"/>
    <property type="match status" value="1"/>
</dbReference>
<dbReference type="Gene3D" id="2.30.30.30">
    <property type="match status" value="3"/>
</dbReference>
<dbReference type="Gene3D" id="3.30.70.940">
    <property type="entry name" value="NusG, N-terminal domain"/>
    <property type="match status" value="1"/>
</dbReference>
<dbReference type="IDEAL" id="IID50299"/>
<dbReference type="InterPro" id="IPR005824">
    <property type="entry name" value="KOW"/>
</dbReference>
<dbReference type="InterPro" id="IPR041973">
    <property type="entry name" value="KOW_Spt5_1"/>
</dbReference>
<dbReference type="InterPro" id="IPR041975">
    <property type="entry name" value="KOW_Spt5_2"/>
</dbReference>
<dbReference type="InterPro" id="IPR041976">
    <property type="entry name" value="KOW_Spt5_3"/>
</dbReference>
<dbReference type="InterPro" id="IPR041977">
    <property type="entry name" value="KOW_Spt5_4"/>
</dbReference>
<dbReference type="InterPro" id="IPR041978">
    <property type="entry name" value="KOW_Spt5_5"/>
</dbReference>
<dbReference type="InterPro" id="IPR005100">
    <property type="entry name" value="NGN-domain"/>
</dbReference>
<dbReference type="InterPro" id="IPR006645">
    <property type="entry name" value="NGN-like_dom"/>
</dbReference>
<dbReference type="InterPro" id="IPR036735">
    <property type="entry name" value="NGN_dom_sf"/>
</dbReference>
<dbReference type="InterPro" id="IPR039385">
    <property type="entry name" value="NGN_Euk"/>
</dbReference>
<dbReference type="InterPro" id="IPR014722">
    <property type="entry name" value="Rib_uL2_dom2"/>
</dbReference>
<dbReference type="InterPro" id="IPR039659">
    <property type="entry name" value="SPT5"/>
</dbReference>
<dbReference type="InterPro" id="IPR024945">
    <property type="entry name" value="Spt5_C_dom"/>
</dbReference>
<dbReference type="InterPro" id="IPR022581">
    <property type="entry name" value="Spt5_N"/>
</dbReference>
<dbReference type="InterPro" id="IPR017071">
    <property type="entry name" value="TF_Spt5_eukaryote"/>
</dbReference>
<dbReference type="InterPro" id="IPR008991">
    <property type="entry name" value="Translation_prot_SH3-like_sf"/>
</dbReference>
<dbReference type="PANTHER" id="PTHR11125">
    <property type="entry name" value="SUPPRESSOR OF TY 5"/>
    <property type="match status" value="1"/>
</dbReference>
<dbReference type="PANTHER" id="PTHR11125:SF7">
    <property type="entry name" value="TRANSCRIPTION ELONGATION FACTOR SPT5"/>
    <property type="match status" value="1"/>
</dbReference>
<dbReference type="Pfam" id="PF12815">
    <property type="entry name" value="CTD"/>
    <property type="match status" value="1"/>
</dbReference>
<dbReference type="Pfam" id="PF00467">
    <property type="entry name" value="KOW"/>
    <property type="match status" value="1"/>
</dbReference>
<dbReference type="Pfam" id="PF23042">
    <property type="entry name" value="KOW1_SPT5"/>
    <property type="match status" value="1"/>
</dbReference>
<dbReference type="Pfam" id="PF23284">
    <property type="entry name" value="KOW2_Spt5"/>
    <property type="match status" value="1"/>
</dbReference>
<dbReference type="Pfam" id="PF23291">
    <property type="entry name" value="KOW4_SPT5"/>
    <property type="match status" value="1"/>
</dbReference>
<dbReference type="Pfam" id="PF23290">
    <property type="entry name" value="KOW5_SPT5"/>
    <property type="match status" value="1"/>
</dbReference>
<dbReference type="Pfam" id="PF23037">
    <property type="entry name" value="KOWx_SPT5"/>
    <property type="match status" value="1"/>
</dbReference>
<dbReference type="Pfam" id="PF03439">
    <property type="entry name" value="Spt5-NGN"/>
    <property type="match status" value="1"/>
</dbReference>
<dbReference type="Pfam" id="PF11942">
    <property type="entry name" value="Spt5_N"/>
    <property type="match status" value="1"/>
</dbReference>
<dbReference type="PIRSF" id="PIRSF036945">
    <property type="entry name" value="Spt5"/>
    <property type="match status" value="1"/>
</dbReference>
<dbReference type="SMART" id="SM01104">
    <property type="entry name" value="CTD"/>
    <property type="match status" value="1"/>
</dbReference>
<dbReference type="SMART" id="SM00739">
    <property type="entry name" value="KOW"/>
    <property type="match status" value="5"/>
</dbReference>
<dbReference type="SMART" id="SM00738">
    <property type="entry name" value="NGN"/>
    <property type="match status" value="1"/>
</dbReference>
<dbReference type="SUPFAM" id="SSF50104">
    <property type="entry name" value="Translation proteins SH3-like domain"/>
    <property type="match status" value="1"/>
</dbReference>
<protein>
    <recommendedName>
        <fullName>Transcription elongation factor spt5</fullName>
    </recommendedName>
    <alternativeName>
        <fullName>Chromatin elongation factor spt5</fullName>
    </alternativeName>
</protein>
<evidence type="ECO:0000250" key="1"/>
<evidence type="ECO:0000256" key="2">
    <source>
        <dbReference type="SAM" id="MobiDB-lite"/>
    </source>
</evidence>
<evidence type="ECO:0000269" key="3">
    <source>
    </source>
</evidence>
<evidence type="ECO:0000269" key="4">
    <source>
    </source>
</evidence>
<evidence type="ECO:0000269" key="5">
    <source>
    </source>
</evidence>
<evidence type="ECO:0000269" key="6">
    <source>
    </source>
</evidence>
<evidence type="ECO:0000305" key="7"/>
<evidence type="ECO:0007829" key="8">
    <source>
        <dbReference type="PDB" id="8QSZ"/>
    </source>
</evidence>
<organism>
    <name type="scientific">Schizosaccharomyces pombe (strain 972 / ATCC 24843)</name>
    <name type="common">Fission yeast</name>
    <dbReference type="NCBI Taxonomy" id="284812"/>
    <lineage>
        <taxon>Eukaryota</taxon>
        <taxon>Fungi</taxon>
        <taxon>Dikarya</taxon>
        <taxon>Ascomycota</taxon>
        <taxon>Taphrinomycotina</taxon>
        <taxon>Schizosaccharomycetes</taxon>
        <taxon>Schizosaccharomycetales</taxon>
        <taxon>Schizosaccharomycetaceae</taxon>
        <taxon>Schizosaccharomyces</taxon>
    </lineage>
</organism>
<gene>
    <name type="primary">spt5</name>
    <name type="ORF">SPAC23C4.19</name>
</gene>
<proteinExistence type="evidence at protein level"/>
<sequence>MDTNSPKSIDKDANSTEVDAAEQDAASVKINSTRASPNGSDLLNDDSEAAKITTNEKQSSPVDSHNESPNDTTINKGEDGNENEVDNVNNNDKKEDEDNVEENEEEADANEEEEEDEEDDEEDEEDEDESGGGRRKRARHDRRNQFLDIEAEVDEDEEELEDEEDEIGREDGFIEEEVGADYVGDDRRHRELDRQRQELQSVDAERLAEEYREKYGRSQTVVGDTSNVPQRLLLPSVNDPNIWAVRCKIGKEKDIVFTIMRKAMDLQYTSSPLEIISAFQRDSLVGYIYVEARKQSHVLDALNGVLNVYTNNMILVPIKEMPDLLKVQKQVVELLPGAYVRIRRGKYAGDLAQVDNLSENGLTARVRIVPRIDYSDGLKRKNSATRPQARLFNESEAFKSNPSKFSKRGPRLFLFNNEEFEDGFLVKDIRISSLITEGVNPTLDEVSKFNPNNEDLDLSSLALSVKGGHAEFQPGDHVEVYVGEQTGVSGVVENVRGSVITMVSSDGLRLDVPSRGLRKRFRHGDYVKVIAGKYKDDTGMVVRISKDEVTFLSDTLMTELTVFSRDLGEASSAQAVNSAYELHDLVQLDVNTVACIFSVDRDTYKVIDQNGGVRTVLASQITMRHSNRRGVATDRNGAEIRIGDKVKEVGGEGKQGTILHIYRAFVFLHNRDIAENNGVFSARSRNVATIAAKGARISADLTKMNPALSNGPALPPVANLKRTIGRDKAIGATVRIRRGPMKGLLGVIKDTTDANARVELHTGNKMVTIPKENLLYTTKTGELISYTEFIERSRGIRPGSISTADGPNVPNWAQGARTPAVANGSRTPAWNTGSRTPAWNSGSKTPAWNSGSRTPAWNSGNKTPAWNAGSRTPAWNSGNKTPAWNVGNKTPAWNSGAKTPAWNAGNKTPSWNNGTKTPAWNANQTPMVANGTNTSWGQTPAYGGFSETNWDTEDNSKPYTAPTPGAWAAPTPGGWDDEEGDSPKYVPPSP</sequence>
<accession>O13936</accession>
<accession>Q9US64</accession>
<comment type="function">
    <text evidence="1 4">The spt4-spt5 complex mediates both activation and inhibition of transcription elongation, and plays a role in pre-mRNA processing. This complex seems to be important for the stability of the RNA polymerase II elongation machinery on the chromatin template but not for the inherent ability of this machinery to translocate down the gene (By similarity).</text>
</comment>
<comment type="subunit">
    <text evidence="1">Component of the spt4-spt5 complex. Interacts with RNA polymerase II (By similarity).</text>
</comment>
<comment type="subcellular location">
    <subcellularLocation>
        <location evidence="3 5">Nucleus</location>
    </subcellularLocation>
</comment>
<comment type="similarity">
    <text evidence="7">Belongs to the SPT5 family.</text>
</comment>